<reference key="1">
    <citation type="journal article" date="2009" name="J. Bacteriol.">
        <title>The genome of Burkholderia cenocepacia J2315, an epidemic pathogen of cystic fibrosis patients.</title>
        <authorList>
            <person name="Holden M.T."/>
            <person name="Seth-Smith H.M."/>
            <person name="Crossman L.C."/>
            <person name="Sebaihia M."/>
            <person name="Bentley S.D."/>
            <person name="Cerdeno-Tarraga A.M."/>
            <person name="Thomson N.R."/>
            <person name="Bason N."/>
            <person name="Quail M.A."/>
            <person name="Sharp S."/>
            <person name="Cherevach I."/>
            <person name="Churcher C."/>
            <person name="Goodhead I."/>
            <person name="Hauser H."/>
            <person name="Holroyd N."/>
            <person name="Mungall K."/>
            <person name="Scott P."/>
            <person name="Walker D."/>
            <person name="White B."/>
            <person name="Rose H."/>
            <person name="Iversen P."/>
            <person name="Mil-Homens D."/>
            <person name="Rocha E.P."/>
            <person name="Fialho A.M."/>
            <person name="Baldwin A."/>
            <person name="Dowson C."/>
            <person name="Barrell B.G."/>
            <person name="Govan J.R."/>
            <person name="Vandamme P."/>
            <person name="Hart C.A."/>
            <person name="Mahenthiralingam E."/>
            <person name="Parkhill J."/>
        </authorList>
    </citation>
    <scope>NUCLEOTIDE SEQUENCE [LARGE SCALE GENOMIC DNA]</scope>
    <source>
        <strain>ATCC BAA-245 / DSM 16553 / LMG 16656 / NCTC 13227 / J2315 / CF5610</strain>
    </source>
</reference>
<evidence type="ECO:0000255" key="1">
    <source>
        <dbReference type="HAMAP-Rule" id="MF_00006"/>
    </source>
</evidence>
<organism>
    <name type="scientific">Burkholderia cenocepacia (strain ATCC BAA-245 / DSM 16553 / LMG 16656 / NCTC 13227 / J2315 / CF5610)</name>
    <name type="common">Burkholderia cepacia (strain J2315)</name>
    <dbReference type="NCBI Taxonomy" id="216591"/>
    <lineage>
        <taxon>Bacteria</taxon>
        <taxon>Pseudomonadati</taxon>
        <taxon>Pseudomonadota</taxon>
        <taxon>Betaproteobacteria</taxon>
        <taxon>Burkholderiales</taxon>
        <taxon>Burkholderiaceae</taxon>
        <taxon>Burkholderia</taxon>
        <taxon>Burkholderia cepacia complex</taxon>
    </lineage>
</organism>
<feature type="chain" id="PRO_1000089070" description="Argininosuccinate lyase">
    <location>
        <begin position="1"/>
        <end position="469"/>
    </location>
</feature>
<name>ARLY_BURCJ</name>
<sequence length="469" mass="51323">MTSQLHKKGEAWSARFSEPMSELVKRYTSSVFFDKRLALVDIAGSLAHANMLAAQKIISADDLAAIERGMAQIKGEIERGEFEWQLDLEDVHLNIEARLTALIGDAGKRLHTGRSRNDQVATDIRLWLRGEIDRIGGLLNDLRGALIDLAEQNADTIMPGFTHLQVAQPVTFGHHLLAYVEMFTRDAERMRDCRTRVNRLPLGAAALAGTSYPIDRHAVAKTLGFDGICANSLDAVSDRDFAIEFTAASALVMTHVSRFSEELVLWMSPRVGFIDIADRFCTGSSIMPQKKNPDVPELARGKTGRVNGHLMALLTLMKGQPLAYNKDNQEDKEPLFDTVDTVADTLRIFAEMVAGITVKPDAMRAAALQGFSTATDLADYLVKRGLPFRDAHEAVAHAVKICDDRGIDLADLTLDEMKQELPNVAHLIGDDVFGYLTLEGSVASRNHPGGTAPDQVRAAVKAARAALGK</sequence>
<protein>
    <recommendedName>
        <fullName evidence="1">Argininosuccinate lyase</fullName>
        <shortName evidence="1">ASAL</shortName>
        <ecNumber evidence="1">4.3.2.1</ecNumber>
    </recommendedName>
    <alternativeName>
        <fullName evidence="1">Arginosuccinase</fullName>
    </alternativeName>
</protein>
<comment type="catalytic activity">
    <reaction evidence="1">
        <text>2-(N(omega)-L-arginino)succinate = fumarate + L-arginine</text>
        <dbReference type="Rhea" id="RHEA:24020"/>
        <dbReference type="ChEBI" id="CHEBI:29806"/>
        <dbReference type="ChEBI" id="CHEBI:32682"/>
        <dbReference type="ChEBI" id="CHEBI:57472"/>
        <dbReference type="EC" id="4.3.2.1"/>
    </reaction>
</comment>
<comment type="pathway">
    <text evidence="1">Amino-acid biosynthesis; L-arginine biosynthesis; L-arginine from L-ornithine and carbamoyl phosphate: step 3/3.</text>
</comment>
<comment type="subcellular location">
    <subcellularLocation>
        <location evidence="1">Cytoplasm</location>
    </subcellularLocation>
</comment>
<comment type="similarity">
    <text evidence="1">Belongs to the lyase 1 family. Argininosuccinate lyase subfamily.</text>
</comment>
<keyword id="KW-0028">Amino-acid biosynthesis</keyword>
<keyword id="KW-0055">Arginine biosynthesis</keyword>
<keyword id="KW-0963">Cytoplasm</keyword>
<keyword id="KW-0456">Lyase</keyword>
<proteinExistence type="inferred from homology"/>
<gene>
    <name evidence="1" type="primary">argH</name>
    <name type="ordered locus">BceJ2315_25780</name>
    <name type="ORF">BCAL2638</name>
</gene>
<accession>B4E8D2</accession>
<dbReference type="EC" id="4.3.2.1" evidence="1"/>
<dbReference type="EMBL" id="AM747720">
    <property type="protein sequence ID" value="CAR52940.1"/>
    <property type="molecule type" value="Genomic_DNA"/>
</dbReference>
<dbReference type="RefSeq" id="WP_006484010.1">
    <property type="nucleotide sequence ID" value="NC_011000.1"/>
</dbReference>
<dbReference type="SMR" id="B4E8D2"/>
<dbReference type="KEGG" id="bcj:BCAL2638"/>
<dbReference type="eggNOG" id="COG0165">
    <property type="taxonomic scope" value="Bacteria"/>
</dbReference>
<dbReference type="HOGENOM" id="CLU_027272_2_3_4"/>
<dbReference type="BioCyc" id="BCEN216591:G1G1V-2925-MONOMER"/>
<dbReference type="UniPathway" id="UPA00068">
    <property type="reaction ID" value="UER00114"/>
</dbReference>
<dbReference type="Proteomes" id="UP000001035">
    <property type="component" value="Chromosome 1"/>
</dbReference>
<dbReference type="GO" id="GO:0005829">
    <property type="term" value="C:cytosol"/>
    <property type="evidence" value="ECO:0007669"/>
    <property type="project" value="TreeGrafter"/>
</dbReference>
<dbReference type="GO" id="GO:0004056">
    <property type="term" value="F:argininosuccinate lyase activity"/>
    <property type="evidence" value="ECO:0007669"/>
    <property type="project" value="UniProtKB-UniRule"/>
</dbReference>
<dbReference type="GO" id="GO:0042450">
    <property type="term" value="P:arginine biosynthetic process via ornithine"/>
    <property type="evidence" value="ECO:0007669"/>
    <property type="project" value="InterPro"/>
</dbReference>
<dbReference type="GO" id="GO:0006526">
    <property type="term" value="P:L-arginine biosynthetic process"/>
    <property type="evidence" value="ECO:0007669"/>
    <property type="project" value="UniProtKB-UniRule"/>
</dbReference>
<dbReference type="CDD" id="cd01359">
    <property type="entry name" value="Argininosuccinate_lyase"/>
    <property type="match status" value="1"/>
</dbReference>
<dbReference type="FunFam" id="1.10.275.10:FF:000002">
    <property type="entry name" value="Argininosuccinate lyase"/>
    <property type="match status" value="1"/>
</dbReference>
<dbReference type="FunFam" id="1.10.40.30:FF:000001">
    <property type="entry name" value="Argininosuccinate lyase"/>
    <property type="match status" value="1"/>
</dbReference>
<dbReference type="FunFam" id="1.20.200.10:FF:000015">
    <property type="entry name" value="argininosuccinate lyase isoform X2"/>
    <property type="match status" value="1"/>
</dbReference>
<dbReference type="Gene3D" id="1.10.40.30">
    <property type="entry name" value="Fumarase/aspartase (C-terminal domain)"/>
    <property type="match status" value="1"/>
</dbReference>
<dbReference type="Gene3D" id="1.20.200.10">
    <property type="entry name" value="Fumarase/aspartase (Central domain)"/>
    <property type="match status" value="1"/>
</dbReference>
<dbReference type="Gene3D" id="1.10.275.10">
    <property type="entry name" value="Fumarase/aspartase (N-terminal domain)"/>
    <property type="match status" value="1"/>
</dbReference>
<dbReference type="HAMAP" id="MF_00006">
    <property type="entry name" value="Arg_succ_lyase"/>
    <property type="match status" value="1"/>
</dbReference>
<dbReference type="InterPro" id="IPR029419">
    <property type="entry name" value="Arg_succ_lyase_C"/>
</dbReference>
<dbReference type="InterPro" id="IPR009049">
    <property type="entry name" value="Argininosuccinate_lyase"/>
</dbReference>
<dbReference type="InterPro" id="IPR024083">
    <property type="entry name" value="Fumarase/histidase_N"/>
</dbReference>
<dbReference type="InterPro" id="IPR020557">
    <property type="entry name" value="Fumarate_lyase_CS"/>
</dbReference>
<dbReference type="InterPro" id="IPR000362">
    <property type="entry name" value="Fumarate_lyase_fam"/>
</dbReference>
<dbReference type="InterPro" id="IPR022761">
    <property type="entry name" value="Fumarate_lyase_N"/>
</dbReference>
<dbReference type="InterPro" id="IPR008948">
    <property type="entry name" value="L-Aspartase-like"/>
</dbReference>
<dbReference type="NCBIfam" id="TIGR00838">
    <property type="entry name" value="argH"/>
    <property type="match status" value="1"/>
</dbReference>
<dbReference type="PANTHER" id="PTHR43814">
    <property type="entry name" value="ARGININOSUCCINATE LYASE"/>
    <property type="match status" value="1"/>
</dbReference>
<dbReference type="PANTHER" id="PTHR43814:SF1">
    <property type="entry name" value="ARGININOSUCCINATE LYASE"/>
    <property type="match status" value="1"/>
</dbReference>
<dbReference type="Pfam" id="PF14698">
    <property type="entry name" value="ASL_C2"/>
    <property type="match status" value="1"/>
</dbReference>
<dbReference type="Pfam" id="PF00206">
    <property type="entry name" value="Lyase_1"/>
    <property type="match status" value="1"/>
</dbReference>
<dbReference type="PRINTS" id="PR00145">
    <property type="entry name" value="ARGSUCLYASE"/>
</dbReference>
<dbReference type="PRINTS" id="PR00149">
    <property type="entry name" value="FUMRATELYASE"/>
</dbReference>
<dbReference type="SUPFAM" id="SSF48557">
    <property type="entry name" value="L-aspartase-like"/>
    <property type="match status" value="1"/>
</dbReference>
<dbReference type="PROSITE" id="PS00163">
    <property type="entry name" value="FUMARATE_LYASES"/>
    <property type="match status" value="1"/>
</dbReference>